<accession>Q73GD5</accession>
<reference key="1">
    <citation type="journal article" date="2004" name="PLoS Biol.">
        <title>Phylogenomics of the reproductive parasite Wolbachia pipientis wMel: a streamlined genome overrun by mobile genetic elements.</title>
        <authorList>
            <person name="Wu M."/>
            <person name="Sun L.V."/>
            <person name="Vamathevan J.J."/>
            <person name="Riegler M."/>
            <person name="DeBoy R.T."/>
            <person name="Brownlie J.C."/>
            <person name="McGraw E.A."/>
            <person name="Martin W."/>
            <person name="Esser C."/>
            <person name="Ahmadinejad N."/>
            <person name="Wiegand C."/>
            <person name="Madupu R."/>
            <person name="Beanan M.J."/>
            <person name="Brinkac L.M."/>
            <person name="Daugherty S.C."/>
            <person name="Durkin A.S."/>
            <person name="Kolonay J.F."/>
            <person name="Nelson W.C."/>
            <person name="Mohamoud Y."/>
            <person name="Lee P."/>
            <person name="Berry K.J."/>
            <person name="Young M.B."/>
            <person name="Utterback T.R."/>
            <person name="Weidman J.F."/>
            <person name="Nierman W.C."/>
            <person name="Paulsen I.T."/>
            <person name="Nelson K.E."/>
            <person name="Tettelin H."/>
            <person name="O'Neill S.L."/>
            <person name="Eisen J.A."/>
        </authorList>
    </citation>
    <scope>NUCLEOTIDE SEQUENCE [LARGE SCALE GENOMIC DNA]</scope>
</reference>
<comment type="function">
    <text evidence="1">Specifically methylates guanosine-37 in various tRNAs.</text>
</comment>
<comment type="catalytic activity">
    <reaction evidence="1">
        <text>guanosine(37) in tRNA + S-adenosyl-L-methionine = N(1)-methylguanosine(37) in tRNA + S-adenosyl-L-homocysteine + H(+)</text>
        <dbReference type="Rhea" id="RHEA:36899"/>
        <dbReference type="Rhea" id="RHEA-COMP:10145"/>
        <dbReference type="Rhea" id="RHEA-COMP:10147"/>
        <dbReference type="ChEBI" id="CHEBI:15378"/>
        <dbReference type="ChEBI" id="CHEBI:57856"/>
        <dbReference type="ChEBI" id="CHEBI:59789"/>
        <dbReference type="ChEBI" id="CHEBI:73542"/>
        <dbReference type="ChEBI" id="CHEBI:74269"/>
        <dbReference type="EC" id="2.1.1.228"/>
    </reaction>
</comment>
<comment type="subunit">
    <text evidence="1">Homodimer.</text>
</comment>
<comment type="subcellular location">
    <subcellularLocation>
        <location evidence="1">Cytoplasm</location>
    </subcellularLocation>
</comment>
<comment type="similarity">
    <text evidence="1">Belongs to the RNA methyltransferase TrmD family.</text>
</comment>
<organism>
    <name type="scientific">Wolbachia pipientis wMel</name>
    <dbReference type="NCBI Taxonomy" id="163164"/>
    <lineage>
        <taxon>Bacteria</taxon>
        <taxon>Pseudomonadati</taxon>
        <taxon>Pseudomonadota</taxon>
        <taxon>Alphaproteobacteria</taxon>
        <taxon>Rickettsiales</taxon>
        <taxon>Anaplasmataceae</taxon>
        <taxon>Wolbachieae</taxon>
        <taxon>Wolbachia</taxon>
    </lineage>
</organism>
<gene>
    <name evidence="1" type="primary">trmD</name>
    <name type="ordered locus">WD_1022</name>
</gene>
<dbReference type="EC" id="2.1.1.228" evidence="1"/>
<dbReference type="EMBL" id="AE017196">
    <property type="protein sequence ID" value="AAS14681.1"/>
    <property type="molecule type" value="Genomic_DNA"/>
</dbReference>
<dbReference type="RefSeq" id="WP_010962990.1">
    <property type="nucleotide sequence ID" value="NZ_OX384529.1"/>
</dbReference>
<dbReference type="SMR" id="Q73GD5"/>
<dbReference type="EnsemblBacteria" id="AAS14681">
    <property type="protein sequence ID" value="AAS14681"/>
    <property type="gene ID" value="WD_1022"/>
</dbReference>
<dbReference type="GeneID" id="70036501"/>
<dbReference type="KEGG" id="wol:WD_1022"/>
<dbReference type="eggNOG" id="COG0336">
    <property type="taxonomic scope" value="Bacteria"/>
</dbReference>
<dbReference type="Proteomes" id="UP000008215">
    <property type="component" value="Chromosome"/>
</dbReference>
<dbReference type="GO" id="GO:0005829">
    <property type="term" value="C:cytosol"/>
    <property type="evidence" value="ECO:0007669"/>
    <property type="project" value="TreeGrafter"/>
</dbReference>
<dbReference type="GO" id="GO:0052906">
    <property type="term" value="F:tRNA (guanine(37)-N1)-methyltransferase activity"/>
    <property type="evidence" value="ECO:0007669"/>
    <property type="project" value="UniProtKB-UniRule"/>
</dbReference>
<dbReference type="GO" id="GO:0002939">
    <property type="term" value="P:tRNA N1-guanine methylation"/>
    <property type="evidence" value="ECO:0007669"/>
    <property type="project" value="TreeGrafter"/>
</dbReference>
<dbReference type="CDD" id="cd18080">
    <property type="entry name" value="TrmD-like"/>
    <property type="match status" value="1"/>
</dbReference>
<dbReference type="FunFam" id="3.40.1280.10:FF:000001">
    <property type="entry name" value="tRNA (guanine-N(1)-)-methyltransferase"/>
    <property type="match status" value="1"/>
</dbReference>
<dbReference type="Gene3D" id="3.40.1280.10">
    <property type="match status" value="1"/>
</dbReference>
<dbReference type="Gene3D" id="1.10.1270.20">
    <property type="entry name" value="tRNA(m1g37)methyltransferase, domain 2"/>
    <property type="match status" value="1"/>
</dbReference>
<dbReference type="HAMAP" id="MF_00605">
    <property type="entry name" value="TrmD"/>
    <property type="match status" value="1"/>
</dbReference>
<dbReference type="InterPro" id="IPR029028">
    <property type="entry name" value="Alpha/beta_knot_MTases"/>
</dbReference>
<dbReference type="InterPro" id="IPR023148">
    <property type="entry name" value="tRNA_m1G_MeTrfase_C_sf"/>
</dbReference>
<dbReference type="InterPro" id="IPR002649">
    <property type="entry name" value="tRNA_m1G_MeTrfase_TrmD"/>
</dbReference>
<dbReference type="InterPro" id="IPR029026">
    <property type="entry name" value="tRNA_m1G_MTases_N"/>
</dbReference>
<dbReference type="InterPro" id="IPR016009">
    <property type="entry name" value="tRNA_MeTrfase_TRMD/TRM10"/>
</dbReference>
<dbReference type="NCBIfam" id="NF000648">
    <property type="entry name" value="PRK00026.1"/>
    <property type="match status" value="1"/>
</dbReference>
<dbReference type="NCBIfam" id="TIGR00088">
    <property type="entry name" value="trmD"/>
    <property type="match status" value="1"/>
</dbReference>
<dbReference type="PANTHER" id="PTHR46417">
    <property type="entry name" value="TRNA (GUANINE-N(1)-)-METHYLTRANSFERASE"/>
    <property type="match status" value="1"/>
</dbReference>
<dbReference type="PANTHER" id="PTHR46417:SF1">
    <property type="entry name" value="TRNA (GUANINE-N(1)-)-METHYLTRANSFERASE"/>
    <property type="match status" value="1"/>
</dbReference>
<dbReference type="Pfam" id="PF01746">
    <property type="entry name" value="tRNA_m1G_MT"/>
    <property type="match status" value="1"/>
</dbReference>
<dbReference type="PIRSF" id="PIRSF000386">
    <property type="entry name" value="tRNA_mtase"/>
    <property type="match status" value="1"/>
</dbReference>
<dbReference type="SUPFAM" id="SSF75217">
    <property type="entry name" value="alpha/beta knot"/>
    <property type="match status" value="1"/>
</dbReference>
<name>TRMD_WOLPM</name>
<evidence type="ECO:0000255" key="1">
    <source>
        <dbReference type="HAMAP-Rule" id="MF_00605"/>
    </source>
</evidence>
<keyword id="KW-0963">Cytoplasm</keyword>
<keyword id="KW-0489">Methyltransferase</keyword>
<keyword id="KW-0949">S-adenosyl-L-methionine</keyword>
<keyword id="KW-0808">Transferase</keyword>
<keyword id="KW-0819">tRNA processing</keyword>
<sequence length="236" mass="26501">MAFNVTILSIFPEMFPGFLNYSLAGKALEKKIWNLEVINIRSFAKDKHSTVDDVPYGGGAGMVMRSDVVGDAVDSMLSVHKNTKFIYMTPSGTKFNQNIARELLEFPHITILCGRFEGIDQRIIDAYTPYELSIGDYILSGGEPAAMVVLDACIRLLPGVVNNTDSITEESFNYGGGVLEYPQYTRPEQWKGYKVPEVLLSGNHKKISDWRQKQSHVITKKRRPELLSGEINDKFT</sequence>
<proteinExistence type="inferred from homology"/>
<protein>
    <recommendedName>
        <fullName evidence="1">tRNA (guanine-N(1)-)-methyltransferase</fullName>
        <ecNumber evidence="1">2.1.1.228</ecNumber>
    </recommendedName>
    <alternativeName>
        <fullName evidence="1">M1G-methyltransferase</fullName>
    </alternativeName>
    <alternativeName>
        <fullName evidence="1">tRNA [GM37] methyltransferase</fullName>
    </alternativeName>
</protein>
<feature type="chain" id="PRO_0000060497" description="tRNA (guanine-N(1)-)-methyltransferase">
    <location>
        <begin position="1"/>
        <end position="236"/>
    </location>
</feature>
<feature type="binding site" evidence="1">
    <location>
        <position position="114"/>
    </location>
    <ligand>
        <name>S-adenosyl-L-methionine</name>
        <dbReference type="ChEBI" id="CHEBI:59789"/>
    </ligand>
</feature>
<feature type="binding site" evidence="1">
    <location>
        <begin position="134"/>
        <end position="139"/>
    </location>
    <ligand>
        <name>S-adenosyl-L-methionine</name>
        <dbReference type="ChEBI" id="CHEBI:59789"/>
    </ligand>
</feature>